<protein>
    <recommendedName>
        <fullName>Phosphoenolpyruvate carboxylase</fullName>
        <shortName>PEPC</shortName>
        <shortName>PEPCase</shortName>
        <ecNumber>4.1.1.31</ecNumber>
    </recommendedName>
</protein>
<feature type="chain" id="PRO_0000166597" description="Phosphoenolpyruvate carboxylase">
    <location>
        <begin position="1"/>
        <end position="879"/>
    </location>
</feature>
<feature type="active site" evidence="1">
    <location>
        <position position="138"/>
    </location>
</feature>
<feature type="active site" evidence="1">
    <location>
        <position position="545"/>
    </location>
</feature>
<name>CAPP_HAEIN</name>
<gene>
    <name type="primary">ppc</name>
    <name type="ordered locus">HI_1636</name>
</gene>
<accession>P43920</accession>
<evidence type="ECO:0000250" key="1"/>
<evidence type="ECO:0000305" key="2"/>
<sequence length="879" mass="100055">MTQEYSTLRNNISMLGRFLGETINDAQGEDILELIENIRKLSRNSRAGDDKARQALLDTLGSISNENIIPVARAFSQFLNLTNIAEQYQTISREHSLAQSSSQSLSELFKRLKEQNASVEEVHKTVEKLLIELVLTAHPTETTRRSLIHKHIEINKCLSKLEHHDLTEKERNIIERLLLRLIAEAWHTNEIRTVRPTPFDEAKWGFAMLENSLWQAVPEFLRQLNETAREFLGYDLSVGLKPVRISSWMGGDRDGNPFVTAQITKKVLYFARWKAADLFLQDISKLADELSMMKCSDEFRDKYGEHLEPYRFVVKNLRNQLTATLAYFDDHLSNRTPRVSESEIILEDNQLWEPLYDCYQSLIQCGMRIIANGSLLNILHRISCFGVTLSQMDIRQESTRHTDAIAEITRYIGLGDYSQWMEDDKQAFLIRELSSRRPLIPQNWTPSPETKEILDTCKVIAQQKQGVIACYVISMARSASDVLAVHLLLKESGVPYHIPVVPLFETLEDLDAAEKVMTQLFNVGWYRGVINNRQMVMIGYSDSAKDAGMMAASWAQYRAQEALVNLTEKLGIELTLFHGRGGTIGRGGAPAHAALLSQPPRSLKNGLRVTEQGEMIRFKLGLPAVAVETFDLYASAILEANLLPPPEPKPEWRTIMDELSTISCDIYRGVVRGDKDFVPYFRSATPEQELSKLPLGSRPAKRNPNGGVESLRAIPWIFAWMQNRLMLPAWLGAGAAIRQVIEQGKGDIIHKMCENWPFFSTRIGMLEMVFSKSDTWLSQQYDQRLVKKELWYLGENLRKQLEDDIQTVLSLSHQSELMSDLPWIADSIALRNIYTDPLNLLQVELLHRFRENPEQVNPDVEQALMITITGIAAGMRNTG</sequence>
<keyword id="KW-0120">Carbon dioxide fixation</keyword>
<keyword id="KW-0456">Lyase</keyword>
<keyword id="KW-0460">Magnesium</keyword>
<keyword id="KW-1185">Reference proteome</keyword>
<comment type="function">
    <text evidence="1">Forms oxaloacetate, a four-carbon dicarboxylic acid source for the tricarboxylic acid cycle.</text>
</comment>
<comment type="catalytic activity">
    <reaction>
        <text>oxaloacetate + phosphate = phosphoenolpyruvate + hydrogencarbonate</text>
        <dbReference type="Rhea" id="RHEA:28370"/>
        <dbReference type="ChEBI" id="CHEBI:16452"/>
        <dbReference type="ChEBI" id="CHEBI:17544"/>
        <dbReference type="ChEBI" id="CHEBI:43474"/>
        <dbReference type="ChEBI" id="CHEBI:58702"/>
        <dbReference type="EC" id="4.1.1.31"/>
    </reaction>
</comment>
<comment type="cofactor">
    <cofactor evidence="1">
        <name>Mg(2+)</name>
        <dbReference type="ChEBI" id="CHEBI:18420"/>
    </cofactor>
</comment>
<comment type="similarity">
    <text evidence="2">Belongs to the PEPCase type 1 family.</text>
</comment>
<dbReference type="EC" id="4.1.1.31"/>
<dbReference type="EMBL" id="L42023">
    <property type="protein sequence ID" value="AAC23281.1"/>
    <property type="molecule type" value="Genomic_DNA"/>
</dbReference>
<dbReference type="PIR" id="I64133">
    <property type="entry name" value="I64133"/>
</dbReference>
<dbReference type="RefSeq" id="NP_439778.1">
    <property type="nucleotide sequence ID" value="NC_000907.1"/>
</dbReference>
<dbReference type="SMR" id="P43920"/>
<dbReference type="STRING" id="71421.HI_1636"/>
<dbReference type="EnsemblBacteria" id="AAC23281">
    <property type="protein sequence ID" value="AAC23281"/>
    <property type="gene ID" value="HI_1636"/>
</dbReference>
<dbReference type="KEGG" id="hin:HI_1636"/>
<dbReference type="PATRIC" id="fig|71421.8.peg.1712"/>
<dbReference type="eggNOG" id="COG2352">
    <property type="taxonomic scope" value="Bacteria"/>
</dbReference>
<dbReference type="HOGENOM" id="CLU_006557_2_0_6"/>
<dbReference type="OrthoDB" id="9768133at2"/>
<dbReference type="PhylomeDB" id="P43920"/>
<dbReference type="BioCyc" id="HINF71421:G1GJ1-1653-MONOMER"/>
<dbReference type="Proteomes" id="UP000000579">
    <property type="component" value="Chromosome"/>
</dbReference>
<dbReference type="GO" id="GO:0005829">
    <property type="term" value="C:cytosol"/>
    <property type="evidence" value="ECO:0000318"/>
    <property type="project" value="GO_Central"/>
</dbReference>
<dbReference type="GO" id="GO:0000287">
    <property type="term" value="F:magnesium ion binding"/>
    <property type="evidence" value="ECO:0007669"/>
    <property type="project" value="UniProtKB-UniRule"/>
</dbReference>
<dbReference type="GO" id="GO:0008964">
    <property type="term" value="F:phosphoenolpyruvate carboxylase activity"/>
    <property type="evidence" value="ECO:0000318"/>
    <property type="project" value="GO_Central"/>
</dbReference>
<dbReference type="GO" id="GO:0015977">
    <property type="term" value="P:carbon fixation"/>
    <property type="evidence" value="ECO:0007669"/>
    <property type="project" value="UniProtKB-UniRule"/>
</dbReference>
<dbReference type="GO" id="GO:0006107">
    <property type="term" value="P:oxaloacetate metabolic process"/>
    <property type="evidence" value="ECO:0007669"/>
    <property type="project" value="UniProtKB-UniRule"/>
</dbReference>
<dbReference type="GO" id="GO:0006099">
    <property type="term" value="P:tricarboxylic acid cycle"/>
    <property type="evidence" value="ECO:0007669"/>
    <property type="project" value="InterPro"/>
</dbReference>
<dbReference type="FunFam" id="1.20.1440.90:FF:000002">
    <property type="entry name" value="Phosphoenolpyruvate carboxylase"/>
    <property type="match status" value="1"/>
</dbReference>
<dbReference type="Gene3D" id="1.20.1440.90">
    <property type="entry name" value="Phosphoenolpyruvate/pyruvate domain"/>
    <property type="match status" value="1"/>
</dbReference>
<dbReference type="HAMAP" id="MF_00595">
    <property type="entry name" value="PEPcase_type1"/>
    <property type="match status" value="1"/>
</dbReference>
<dbReference type="InterPro" id="IPR021135">
    <property type="entry name" value="PEP_COase"/>
</dbReference>
<dbReference type="InterPro" id="IPR022805">
    <property type="entry name" value="PEP_COase_bac/pln-type"/>
</dbReference>
<dbReference type="InterPro" id="IPR018129">
    <property type="entry name" value="PEP_COase_Lys_AS"/>
</dbReference>
<dbReference type="InterPro" id="IPR033129">
    <property type="entry name" value="PEPCASE_His_AS"/>
</dbReference>
<dbReference type="InterPro" id="IPR015813">
    <property type="entry name" value="Pyrv/PenolPyrv_kinase-like_dom"/>
</dbReference>
<dbReference type="NCBIfam" id="NF000584">
    <property type="entry name" value="PRK00009.1"/>
    <property type="match status" value="1"/>
</dbReference>
<dbReference type="PANTHER" id="PTHR30523">
    <property type="entry name" value="PHOSPHOENOLPYRUVATE CARBOXYLASE"/>
    <property type="match status" value="1"/>
</dbReference>
<dbReference type="PANTHER" id="PTHR30523:SF6">
    <property type="entry name" value="PHOSPHOENOLPYRUVATE CARBOXYLASE"/>
    <property type="match status" value="1"/>
</dbReference>
<dbReference type="Pfam" id="PF00311">
    <property type="entry name" value="PEPcase"/>
    <property type="match status" value="1"/>
</dbReference>
<dbReference type="PRINTS" id="PR00150">
    <property type="entry name" value="PEPCARBXLASE"/>
</dbReference>
<dbReference type="SUPFAM" id="SSF51621">
    <property type="entry name" value="Phosphoenolpyruvate/pyruvate domain"/>
    <property type="match status" value="1"/>
</dbReference>
<dbReference type="PROSITE" id="PS00781">
    <property type="entry name" value="PEPCASE_1"/>
    <property type="match status" value="1"/>
</dbReference>
<dbReference type="PROSITE" id="PS00393">
    <property type="entry name" value="PEPCASE_2"/>
    <property type="match status" value="1"/>
</dbReference>
<reference key="1">
    <citation type="journal article" date="1995" name="Science">
        <title>Whole-genome random sequencing and assembly of Haemophilus influenzae Rd.</title>
        <authorList>
            <person name="Fleischmann R.D."/>
            <person name="Adams M.D."/>
            <person name="White O."/>
            <person name="Clayton R.A."/>
            <person name="Kirkness E.F."/>
            <person name="Kerlavage A.R."/>
            <person name="Bult C.J."/>
            <person name="Tomb J.-F."/>
            <person name="Dougherty B.A."/>
            <person name="Merrick J.M."/>
            <person name="McKenney K."/>
            <person name="Sutton G.G."/>
            <person name="FitzHugh W."/>
            <person name="Fields C.A."/>
            <person name="Gocayne J.D."/>
            <person name="Scott J.D."/>
            <person name="Shirley R."/>
            <person name="Liu L.-I."/>
            <person name="Glodek A."/>
            <person name="Kelley J.M."/>
            <person name="Weidman J.F."/>
            <person name="Phillips C.A."/>
            <person name="Spriggs T."/>
            <person name="Hedblom E."/>
            <person name="Cotton M.D."/>
            <person name="Utterback T.R."/>
            <person name="Hanna M.C."/>
            <person name="Nguyen D.T."/>
            <person name="Saudek D.M."/>
            <person name="Brandon R.C."/>
            <person name="Fine L.D."/>
            <person name="Fritchman J.L."/>
            <person name="Fuhrmann J.L."/>
            <person name="Geoghagen N.S.M."/>
            <person name="Gnehm C.L."/>
            <person name="McDonald L.A."/>
            <person name="Small K.V."/>
            <person name="Fraser C.M."/>
            <person name="Smith H.O."/>
            <person name="Venter J.C."/>
        </authorList>
    </citation>
    <scope>NUCLEOTIDE SEQUENCE [LARGE SCALE GENOMIC DNA]</scope>
    <source>
        <strain>ATCC 51907 / DSM 11121 / KW20 / Rd</strain>
    </source>
</reference>
<organism>
    <name type="scientific">Haemophilus influenzae (strain ATCC 51907 / DSM 11121 / KW20 / Rd)</name>
    <dbReference type="NCBI Taxonomy" id="71421"/>
    <lineage>
        <taxon>Bacteria</taxon>
        <taxon>Pseudomonadati</taxon>
        <taxon>Pseudomonadota</taxon>
        <taxon>Gammaproteobacteria</taxon>
        <taxon>Pasteurellales</taxon>
        <taxon>Pasteurellaceae</taxon>
        <taxon>Haemophilus</taxon>
    </lineage>
</organism>
<proteinExistence type="inferred from homology"/>